<sequence length="201" mass="20698">MKKIKKIIQIGMIGGLAAVAGGALAGCGSNNDNADTLNQAANAQGAFVIIEETAPGQYKIKDQYPSDETRVVLKDLNGTERILSKEEMDALIKEEAAKIDNGTSNLTKDNGQISSGGLSLGETLLASAAGAILGSWIGSKLFNNQNFANQQRGAFSNQSAYQRSVNSFNKAGTTSSASSAKKSGFFGGGSKATSSSSSFGS</sequence>
<organism>
    <name type="scientific">Campylobacter jejuni subsp. jejuni serotype O:6 (strain 81116 / NCTC 11828)</name>
    <dbReference type="NCBI Taxonomy" id="407148"/>
    <lineage>
        <taxon>Bacteria</taxon>
        <taxon>Pseudomonadati</taxon>
        <taxon>Campylobacterota</taxon>
        <taxon>Epsilonproteobacteria</taxon>
        <taxon>Campylobacterales</taxon>
        <taxon>Campylobacteraceae</taxon>
        <taxon>Campylobacter</taxon>
    </lineage>
</organism>
<feature type="signal peptide" evidence="1">
    <location>
        <begin position="1"/>
        <end position="26"/>
    </location>
</feature>
<feature type="chain" id="PRO_1000073511" description="UPF0323 lipoprotein C8J_0347">
    <location>
        <begin position="27"/>
        <end position="201"/>
    </location>
</feature>
<feature type="region of interest" description="Disordered" evidence="2">
    <location>
        <begin position="169"/>
        <end position="201"/>
    </location>
</feature>
<feature type="compositionally biased region" description="Low complexity" evidence="2">
    <location>
        <begin position="170"/>
        <end position="184"/>
    </location>
</feature>
<feature type="compositionally biased region" description="Low complexity" evidence="2">
    <location>
        <begin position="191"/>
        <end position="201"/>
    </location>
</feature>
<feature type="lipid moiety-binding region" description="N-palmitoyl cysteine" evidence="1">
    <location>
        <position position="27"/>
    </location>
</feature>
<feature type="lipid moiety-binding region" description="S-diacylglycerol cysteine" evidence="1">
    <location>
        <position position="27"/>
    </location>
</feature>
<protein>
    <recommendedName>
        <fullName evidence="1">UPF0323 lipoprotein C8J_0347</fullName>
    </recommendedName>
</protein>
<reference key="1">
    <citation type="journal article" date="2007" name="J. Bacteriol.">
        <title>The complete genome sequence of Campylobacter jejuni strain 81116 (NCTC11828).</title>
        <authorList>
            <person name="Pearson B.M."/>
            <person name="Gaskin D.J.H."/>
            <person name="Segers R.P.A.M."/>
            <person name="Wells J.M."/>
            <person name="Nuijten P.J.M."/>
            <person name="van Vliet A.H.M."/>
        </authorList>
    </citation>
    <scope>NUCLEOTIDE SEQUENCE [LARGE SCALE GENOMIC DNA]</scope>
    <source>
        <strain>81116 / NCTC 11828</strain>
    </source>
</reference>
<accession>A8FKF9</accession>
<name>Y347_CAMJ8</name>
<gene>
    <name type="ordered locus">C8J_0347</name>
</gene>
<proteinExistence type="inferred from homology"/>
<dbReference type="EMBL" id="CP000814">
    <property type="protein sequence ID" value="ABV51946.1"/>
    <property type="molecule type" value="Genomic_DNA"/>
</dbReference>
<dbReference type="RefSeq" id="WP_002854351.1">
    <property type="nucleotide sequence ID" value="NC_009839.1"/>
</dbReference>
<dbReference type="KEGG" id="cju:C8J_0347"/>
<dbReference type="HOGENOM" id="CLU_111520_0_0_7"/>
<dbReference type="GO" id="GO:0005886">
    <property type="term" value="C:plasma membrane"/>
    <property type="evidence" value="ECO:0007669"/>
    <property type="project" value="UniProtKB-SubCell"/>
</dbReference>
<dbReference type="HAMAP" id="MF_01421">
    <property type="entry name" value="UPF0323"/>
    <property type="match status" value="1"/>
</dbReference>
<dbReference type="InterPro" id="IPR020913">
    <property type="entry name" value="UPF0323"/>
</dbReference>
<dbReference type="NCBIfam" id="NF003146">
    <property type="entry name" value="PRK04081.1"/>
    <property type="match status" value="1"/>
</dbReference>
<dbReference type="PROSITE" id="PS51257">
    <property type="entry name" value="PROKAR_LIPOPROTEIN"/>
    <property type="match status" value="1"/>
</dbReference>
<keyword id="KW-1003">Cell membrane</keyword>
<keyword id="KW-0449">Lipoprotein</keyword>
<keyword id="KW-0472">Membrane</keyword>
<keyword id="KW-0564">Palmitate</keyword>
<keyword id="KW-0732">Signal</keyword>
<comment type="subcellular location">
    <subcellularLocation>
        <location evidence="1">Cell membrane</location>
        <topology evidence="1">Lipid-anchor</topology>
    </subcellularLocation>
</comment>
<comment type="similarity">
    <text evidence="1">Belongs to the UPF0323 family.</text>
</comment>
<evidence type="ECO:0000255" key="1">
    <source>
        <dbReference type="HAMAP-Rule" id="MF_01421"/>
    </source>
</evidence>
<evidence type="ECO:0000256" key="2">
    <source>
        <dbReference type="SAM" id="MobiDB-lite"/>
    </source>
</evidence>